<dbReference type="EMBL" id="CP000743">
    <property type="protein sequence ID" value="ABR56989.1"/>
    <property type="molecule type" value="Genomic_DNA"/>
</dbReference>
<dbReference type="RefSeq" id="WP_011974121.1">
    <property type="nucleotide sequence ID" value="NC_009635.1"/>
</dbReference>
<dbReference type="SMR" id="A6UWW7"/>
<dbReference type="STRING" id="419665.Maeo_1413"/>
<dbReference type="GeneID" id="5326935"/>
<dbReference type="KEGG" id="mae:Maeo_1413"/>
<dbReference type="eggNOG" id="arCOG02957">
    <property type="taxonomic scope" value="Archaea"/>
</dbReference>
<dbReference type="HOGENOM" id="CLU_3057121_0_0_2"/>
<dbReference type="OrthoDB" id="43651at2157"/>
<dbReference type="Proteomes" id="UP000001106">
    <property type="component" value="Chromosome"/>
</dbReference>
<dbReference type="GO" id="GO:0005886">
    <property type="term" value="C:plasma membrane"/>
    <property type="evidence" value="ECO:0007669"/>
    <property type="project" value="UniProtKB-SubCell"/>
</dbReference>
<dbReference type="GO" id="GO:0015031">
    <property type="term" value="P:protein transport"/>
    <property type="evidence" value="ECO:0007669"/>
    <property type="project" value="UniProtKB-UniRule"/>
</dbReference>
<dbReference type="HAMAP" id="MF_00751">
    <property type="entry name" value="SecG"/>
    <property type="match status" value="1"/>
</dbReference>
<dbReference type="InterPro" id="IPR023531">
    <property type="entry name" value="Preprot_translocase_SecG"/>
</dbReference>
<dbReference type="InterPro" id="IPR016482">
    <property type="entry name" value="SecG/Sec61-beta/Sbh"/>
</dbReference>
<dbReference type="Pfam" id="PF03911">
    <property type="entry name" value="Sec61_beta"/>
    <property type="match status" value="1"/>
</dbReference>
<dbReference type="SUPFAM" id="SSF103460">
    <property type="entry name" value="Sec-beta subunit"/>
    <property type="match status" value="1"/>
</dbReference>
<organism>
    <name type="scientific">Methanococcus aeolicus (strain ATCC BAA-1280 / DSM 17508 / OCM 812 / Nankai-3)</name>
    <dbReference type="NCBI Taxonomy" id="419665"/>
    <lineage>
        <taxon>Archaea</taxon>
        <taxon>Methanobacteriati</taxon>
        <taxon>Methanobacteriota</taxon>
        <taxon>Methanomada group</taxon>
        <taxon>Methanococci</taxon>
        <taxon>Methanococcales</taxon>
        <taxon>Methanococcaceae</taxon>
        <taxon>Methanococcus</taxon>
    </lineage>
</organism>
<name>SECG_META3</name>
<protein>
    <recommendedName>
        <fullName evidence="1">Preprotein translocase subunit SecG</fullName>
    </recommendedName>
    <alternativeName>
        <fullName evidence="1">Protein transport protein Sec61 subunit beta homolog</fullName>
    </alternativeName>
</protein>
<keyword id="KW-1003">Cell membrane</keyword>
<keyword id="KW-0472">Membrane</keyword>
<keyword id="KW-0653">Protein transport</keyword>
<keyword id="KW-0811">Translocation</keyword>
<keyword id="KW-0812">Transmembrane</keyword>
<keyword id="KW-1133">Transmembrane helix</keyword>
<keyword id="KW-0813">Transport</keyword>
<proteinExistence type="inferred from homology"/>
<comment type="function">
    <text evidence="1">Involved in protein export. The function of the beta subunit is unknown, but it may be involved in stabilization of the trimeric complex.</text>
</comment>
<comment type="subunit">
    <text evidence="1">Component of the protein translocase complex. Heterotrimer consisting of alpha (SecY), beta (SecG) and gamma (SecE) subunits. Can form oligomers of the heterotrimer.</text>
</comment>
<comment type="subcellular location">
    <subcellularLocation>
        <location evidence="1">Cell membrane</location>
        <topology evidence="1">Single-pass membrane protein</topology>
    </subcellularLocation>
</comment>
<comment type="similarity">
    <text evidence="1">Belongs to the SEC61-beta family.</text>
</comment>
<feature type="chain" id="PRO_1000196953" description="Preprotein translocase subunit SecG">
    <location>
        <begin position="1"/>
        <end position="54"/>
    </location>
</feature>
<feature type="topological domain" description="Cytoplasmic" evidence="1">
    <location>
        <begin position="1"/>
        <end position="30"/>
    </location>
</feature>
<feature type="transmembrane region" description="Helical" evidence="1">
    <location>
        <begin position="31"/>
        <end position="52"/>
    </location>
</feature>
<feature type="topological domain" description="Extracellular" evidence="1">
    <location>
        <begin position="53"/>
        <end position="54"/>
    </location>
</feature>
<gene>
    <name evidence="1" type="primary">secG</name>
    <name type="ordered locus">Maeo_1413</name>
</gene>
<sequence>MSKNKQDAGLSTSAGLVRYMDEDASKIKIAPEKVLGITISIMVLLFILNYGLLA</sequence>
<evidence type="ECO:0000255" key="1">
    <source>
        <dbReference type="HAMAP-Rule" id="MF_00751"/>
    </source>
</evidence>
<reference key="1">
    <citation type="submission" date="2007-06" db="EMBL/GenBank/DDBJ databases">
        <title>Complete sequence of Methanococcus aeolicus Nankai-3.</title>
        <authorList>
            <consortium name="US DOE Joint Genome Institute"/>
            <person name="Copeland A."/>
            <person name="Lucas S."/>
            <person name="Lapidus A."/>
            <person name="Barry K."/>
            <person name="Glavina del Rio T."/>
            <person name="Dalin E."/>
            <person name="Tice H."/>
            <person name="Pitluck S."/>
            <person name="Chain P."/>
            <person name="Malfatti S."/>
            <person name="Shin M."/>
            <person name="Vergez L."/>
            <person name="Schmutz J."/>
            <person name="Larimer F."/>
            <person name="Land M."/>
            <person name="Hauser L."/>
            <person name="Kyrpides N."/>
            <person name="Lykidis A."/>
            <person name="Sieprawska-Lupa M."/>
            <person name="Whitman W.B."/>
            <person name="Richardson P."/>
        </authorList>
    </citation>
    <scope>NUCLEOTIDE SEQUENCE [LARGE SCALE GENOMIC DNA]</scope>
    <source>
        <strain>ATCC BAA-1280 / DSM 17508 / OCM 812 / Nankai-3</strain>
    </source>
</reference>
<accession>A6UWW7</accession>